<organism>
    <name type="scientific">Rubrobacter xylanophilus (strain DSM 9941 / JCM 11954 / NBRC 16129 / PRD-1)</name>
    <dbReference type="NCBI Taxonomy" id="266117"/>
    <lineage>
        <taxon>Bacteria</taxon>
        <taxon>Bacillati</taxon>
        <taxon>Actinomycetota</taxon>
        <taxon>Rubrobacteria</taxon>
        <taxon>Rubrobacterales</taxon>
        <taxon>Rubrobacteraceae</taxon>
        <taxon>Rubrobacter</taxon>
    </lineage>
</organism>
<dbReference type="EMBL" id="CP000386">
    <property type="protein sequence ID" value="ABG05103.1"/>
    <property type="molecule type" value="Genomic_DNA"/>
</dbReference>
<dbReference type="RefSeq" id="WP_011565118.1">
    <property type="nucleotide sequence ID" value="NC_008148.1"/>
</dbReference>
<dbReference type="SMR" id="Q1AU25"/>
<dbReference type="STRING" id="266117.Rxyl_2159"/>
<dbReference type="KEGG" id="rxy:Rxyl_2159"/>
<dbReference type="eggNOG" id="COG0049">
    <property type="taxonomic scope" value="Bacteria"/>
</dbReference>
<dbReference type="HOGENOM" id="CLU_072226_1_1_11"/>
<dbReference type="OrthoDB" id="9807653at2"/>
<dbReference type="PhylomeDB" id="Q1AU25"/>
<dbReference type="Proteomes" id="UP000006637">
    <property type="component" value="Chromosome"/>
</dbReference>
<dbReference type="GO" id="GO:0015935">
    <property type="term" value="C:small ribosomal subunit"/>
    <property type="evidence" value="ECO:0007669"/>
    <property type="project" value="InterPro"/>
</dbReference>
<dbReference type="GO" id="GO:0019843">
    <property type="term" value="F:rRNA binding"/>
    <property type="evidence" value="ECO:0007669"/>
    <property type="project" value="UniProtKB-UniRule"/>
</dbReference>
<dbReference type="GO" id="GO:0003735">
    <property type="term" value="F:structural constituent of ribosome"/>
    <property type="evidence" value="ECO:0007669"/>
    <property type="project" value="InterPro"/>
</dbReference>
<dbReference type="GO" id="GO:0000049">
    <property type="term" value="F:tRNA binding"/>
    <property type="evidence" value="ECO:0007669"/>
    <property type="project" value="UniProtKB-UniRule"/>
</dbReference>
<dbReference type="GO" id="GO:0006412">
    <property type="term" value="P:translation"/>
    <property type="evidence" value="ECO:0007669"/>
    <property type="project" value="UniProtKB-UniRule"/>
</dbReference>
<dbReference type="CDD" id="cd14869">
    <property type="entry name" value="uS7_Bacteria"/>
    <property type="match status" value="1"/>
</dbReference>
<dbReference type="FunFam" id="1.10.455.10:FF:000001">
    <property type="entry name" value="30S ribosomal protein S7"/>
    <property type="match status" value="1"/>
</dbReference>
<dbReference type="Gene3D" id="1.10.455.10">
    <property type="entry name" value="Ribosomal protein S7 domain"/>
    <property type="match status" value="1"/>
</dbReference>
<dbReference type="HAMAP" id="MF_00480_B">
    <property type="entry name" value="Ribosomal_uS7_B"/>
    <property type="match status" value="1"/>
</dbReference>
<dbReference type="InterPro" id="IPR000235">
    <property type="entry name" value="Ribosomal_uS7"/>
</dbReference>
<dbReference type="InterPro" id="IPR005717">
    <property type="entry name" value="Ribosomal_uS7_bac/org-type"/>
</dbReference>
<dbReference type="InterPro" id="IPR020606">
    <property type="entry name" value="Ribosomal_uS7_CS"/>
</dbReference>
<dbReference type="InterPro" id="IPR023798">
    <property type="entry name" value="Ribosomal_uS7_dom"/>
</dbReference>
<dbReference type="InterPro" id="IPR036823">
    <property type="entry name" value="Ribosomal_uS7_dom_sf"/>
</dbReference>
<dbReference type="NCBIfam" id="TIGR01029">
    <property type="entry name" value="rpsG_bact"/>
    <property type="match status" value="1"/>
</dbReference>
<dbReference type="PANTHER" id="PTHR11205">
    <property type="entry name" value="RIBOSOMAL PROTEIN S7"/>
    <property type="match status" value="1"/>
</dbReference>
<dbReference type="Pfam" id="PF00177">
    <property type="entry name" value="Ribosomal_S7"/>
    <property type="match status" value="1"/>
</dbReference>
<dbReference type="PIRSF" id="PIRSF002122">
    <property type="entry name" value="RPS7p_RPS7a_RPS5e_RPS7o"/>
    <property type="match status" value="1"/>
</dbReference>
<dbReference type="SUPFAM" id="SSF47973">
    <property type="entry name" value="Ribosomal protein S7"/>
    <property type="match status" value="1"/>
</dbReference>
<dbReference type="PROSITE" id="PS00052">
    <property type="entry name" value="RIBOSOMAL_S7"/>
    <property type="match status" value="1"/>
</dbReference>
<keyword id="KW-1185">Reference proteome</keyword>
<keyword id="KW-0687">Ribonucleoprotein</keyword>
<keyword id="KW-0689">Ribosomal protein</keyword>
<keyword id="KW-0694">RNA-binding</keyword>
<keyword id="KW-0699">rRNA-binding</keyword>
<keyword id="KW-0820">tRNA-binding</keyword>
<accession>Q1AU25</accession>
<proteinExistence type="inferred from homology"/>
<name>RS7_RUBXD</name>
<evidence type="ECO:0000255" key="1">
    <source>
        <dbReference type="HAMAP-Rule" id="MF_00480"/>
    </source>
</evidence>
<evidence type="ECO:0000305" key="2"/>
<protein>
    <recommendedName>
        <fullName evidence="1">Small ribosomal subunit protein uS7</fullName>
    </recommendedName>
    <alternativeName>
        <fullName evidence="2">30S ribosomal protein S7</fullName>
    </alternativeName>
</protein>
<sequence length="156" mass="17720">MPRRGAPPKREIPPDPVYGSVLVQQLINKVMKDGKKSKAEKIVYNALSMVEERTGDNPVTVLSQALDNIKPRLEVRSRRVGGATYQVPVEVPPRRANTLALRWLVNFARARREKTMGHRLAGEILDAKDNIGASIRKKEETHRMAEANRAFAHYRW</sequence>
<comment type="function">
    <text evidence="1">One of the primary rRNA binding proteins, it binds directly to 16S rRNA where it nucleates assembly of the head domain of the 30S subunit. Is located at the subunit interface close to the decoding center, probably blocks exit of the E-site tRNA.</text>
</comment>
<comment type="subunit">
    <text evidence="1">Part of the 30S ribosomal subunit. Contacts proteins S9 and S11.</text>
</comment>
<comment type="similarity">
    <text evidence="1">Belongs to the universal ribosomal protein uS7 family.</text>
</comment>
<feature type="chain" id="PRO_1000014279" description="Small ribosomal subunit protein uS7">
    <location>
        <begin position="1"/>
        <end position="156"/>
    </location>
</feature>
<gene>
    <name evidence="1" type="primary">rpsG</name>
    <name type="ordered locus">Rxyl_2159</name>
</gene>
<reference key="1">
    <citation type="submission" date="2006-06" db="EMBL/GenBank/DDBJ databases">
        <title>Complete sequence of Rubrobacter xylanophilus DSM 9941.</title>
        <authorList>
            <consortium name="US DOE Joint Genome Institute"/>
            <person name="Copeland A."/>
            <person name="Lucas S."/>
            <person name="Lapidus A."/>
            <person name="Barry K."/>
            <person name="Detter J.C."/>
            <person name="Glavina del Rio T."/>
            <person name="Hammon N."/>
            <person name="Israni S."/>
            <person name="Dalin E."/>
            <person name="Tice H."/>
            <person name="Pitluck S."/>
            <person name="Munk A.C."/>
            <person name="Brettin T."/>
            <person name="Bruce D."/>
            <person name="Han C."/>
            <person name="Tapia R."/>
            <person name="Gilna P."/>
            <person name="Schmutz J."/>
            <person name="Larimer F."/>
            <person name="Land M."/>
            <person name="Hauser L."/>
            <person name="Kyrpides N."/>
            <person name="Lykidis A."/>
            <person name="da Costa M.S."/>
            <person name="Rainey F.A."/>
            <person name="Empadinhas N."/>
            <person name="Jolivet E."/>
            <person name="Battista J.R."/>
            <person name="Richardson P."/>
        </authorList>
    </citation>
    <scope>NUCLEOTIDE SEQUENCE [LARGE SCALE GENOMIC DNA]</scope>
    <source>
        <strain>DSM 9941 / JCM 11954 / NBRC 16129 / PRD-1</strain>
    </source>
</reference>